<organism>
    <name type="scientific">Staphylococcus aureus (strain Mu50 / ATCC 700699)</name>
    <dbReference type="NCBI Taxonomy" id="158878"/>
    <lineage>
        <taxon>Bacteria</taxon>
        <taxon>Bacillati</taxon>
        <taxon>Bacillota</taxon>
        <taxon>Bacilli</taxon>
        <taxon>Bacillales</taxon>
        <taxon>Staphylococcaceae</taxon>
        <taxon>Staphylococcus</taxon>
    </lineage>
</organism>
<accession>P67584</accession>
<accession>Q99TH9</accession>
<name>SYT_STAAM</name>
<sequence length="645" mass="74388">MEQINIQFPDGNKKAFDKGTTTEDIAQSISPGLRKKAVAGKFNGQLVDLTKPLETDGSIGIVTPGSEEALEVLRHSTAHLMAHAIKRLYGNVKFGVGPVIEGGFYYDFDIDQNISSDDFEQIEKTMKQIVNENMKIERKVVSRDEAKELFSNDEYKLELIDAIPEDENVTLYSQGDFTDLCRGVHVPSTAKIKEFKLLSTAGAYWRGDSNNKMLQRIYGTAFFDKKELKAHLQMLEERKERDHRKIGKELELFTNSQLVGAGLPLWLPNGATIRREIERYIVDKEVSMGYDHVYTPVLANVDLYKTSGHWDHYQEDMFPPMQLDETESMVLRPMNCPHHMMIYANKPHSYRELPIRIAELGTMHRYEASGAVSGLQRVRGMTLNDSHIFVRPDQIKEEFKRVVNMIIDVYKDFGFEDYSFRLSYRDPEDKEKYFDDDDMWNKAENMLKEAADELGLSYEEAIGEAAFYGPKLDVQVKTAMGKEETLSTAQLDFLLPERFDLTYIGQDGEHHRPVVIHRGVVSTMERFVAFLTEETKGAFPTWLAPKQVQIIPVNVDLHYDYARQLQDELKSQGVRVSIDDRNEKMGYKIREAQMQKIPYQIVVGDKEVENNQVNVRQYGSQDQETVEKDEFIWNLVDEIRLKKHR</sequence>
<gene>
    <name evidence="1" type="primary">thrS</name>
    <name type="ordered locus">SAV1683</name>
</gene>
<protein>
    <recommendedName>
        <fullName evidence="1">Threonine--tRNA ligase</fullName>
        <ecNumber evidence="1">6.1.1.3</ecNumber>
    </recommendedName>
    <alternativeName>
        <fullName evidence="1">Threonyl-tRNA synthetase</fullName>
        <shortName evidence="1">ThrRS</shortName>
    </alternativeName>
</protein>
<dbReference type="EC" id="6.1.1.3" evidence="1"/>
<dbReference type="EMBL" id="BA000017">
    <property type="protein sequence ID" value="BAB57845.1"/>
    <property type="molecule type" value="Genomic_DNA"/>
</dbReference>
<dbReference type="RefSeq" id="WP_000435143.1">
    <property type="nucleotide sequence ID" value="NC_002758.2"/>
</dbReference>
<dbReference type="SMR" id="P67584"/>
<dbReference type="KEGG" id="sav:SAV1683"/>
<dbReference type="HOGENOM" id="CLU_008554_0_1_9"/>
<dbReference type="PhylomeDB" id="P67584"/>
<dbReference type="Proteomes" id="UP000002481">
    <property type="component" value="Chromosome"/>
</dbReference>
<dbReference type="GO" id="GO:0005737">
    <property type="term" value="C:cytoplasm"/>
    <property type="evidence" value="ECO:0007669"/>
    <property type="project" value="UniProtKB-SubCell"/>
</dbReference>
<dbReference type="GO" id="GO:0005524">
    <property type="term" value="F:ATP binding"/>
    <property type="evidence" value="ECO:0007669"/>
    <property type="project" value="UniProtKB-UniRule"/>
</dbReference>
<dbReference type="GO" id="GO:0140096">
    <property type="term" value="F:catalytic activity, acting on a protein"/>
    <property type="evidence" value="ECO:0007669"/>
    <property type="project" value="UniProtKB-ARBA"/>
</dbReference>
<dbReference type="GO" id="GO:0046872">
    <property type="term" value="F:metal ion binding"/>
    <property type="evidence" value="ECO:0007669"/>
    <property type="project" value="UniProtKB-KW"/>
</dbReference>
<dbReference type="GO" id="GO:0004829">
    <property type="term" value="F:threonine-tRNA ligase activity"/>
    <property type="evidence" value="ECO:0007669"/>
    <property type="project" value="UniProtKB-UniRule"/>
</dbReference>
<dbReference type="GO" id="GO:0016740">
    <property type="term" value="F:transferase activity"/>
    <property type="evidence" value="ECO:0007669"/>
    <property type="project" value="UniProtKB-ARBA"/>
</dbReference>
<dbReference type="GO" id="GO:0000049">
    <property type="term" value="F:tRNA binding"/>
    <property type="evidence" value="ECO:0007669"/>
    <property type="project" value="UniProtKB-KW"/>
</dbReference>
<dbReference type="GO" id="GO:0006435">
    <property type="term" value="P:threonyl-tRNA aminoacylation"/>
    <property type="evidence" value="ECO:0007669"/>
    <property type="project" value="UniProtKB-UniRule"/>
</dbReference>
<dbReference type="CDD" id="cd01667">
    <property type="entry name" value="TGS_ThrRS"/>
    <property type="match status" value="1"/>
</dbReference>
<dbReference type="CDD" id="cd00860">
    <property type="entry name" value="ThrRS_anticodon"/>
    <property type="match status" value="1"/>
</dbReference>
<dbReference type="CDD" id="cd00771">
    <property type="entry name" value="ThrRS_core"/>
    <property type="match status" value="1"/>
</dbReference>
<dbReference type="FunFam" id="3.10.20.30:FF:000005">
    <property type="entry name" value="Threonine--tRNA ligase"/>
    <property type="match status" value="1"/>
</dbReference>
<dbReference type="FunFam" id="3.30.54.20:FF:000002">
    <property type="entry name" value="Threonine--tRNA ligase"/>
    <property type="match status" value="1"/>
</dbReference>
<dbReference type="FunFam" id="3.30.930.10:FF:000002">
    <property type="entry name" value="Threonine--tRNA ligase"/>
    <property type="match status" value="1"/>
</dbReference>
<dbReference type="FunFam" id="3.40.50.800:FF:000001">
    <property type="entry name" value="Threonine--tRNA ligase"/>
    <property type="match status" value="1"/>
</dbReference>
<dbReference type="FunFam" id="3.30.980.10:FF:000005">
    <property type="entry name" value="Threonyl-tRNA synthetase, mitochondrial"/>
    <property type="match status" value="1"/>
</dbReference>
<dbReference type="Gene3D" id="3.10.20.30">
    <property type="match status" value="1"/>
</dbReference>
<dbReference type="Gene3D" id="3.30.54.20">
    <property type="match status" value="1"/>
</dbReference>
<dbReference type="Gene3D" id="3.40.50.800">
    <property type="entry name" value="Anticodon-binding domain"/>
    <property type="match status" value="1"/>
</dbReference>
<dbReference type="Gene3D" id="3.30.930.10">
    <property type="entry name" value="Bira Bifunctional Protein, Domain 2"/>
    <property type="match status" value="1"/>
</dbReference>
<dbReference type="Gene3D" id="3.30.980.10">
    <property type="entry name" value="Threonyl-trna Synthetase, Chain A, domain 2"/>
    <property type="match status" value="1"/>
</dbReference>
<dbReference type="HAMAP" id="MF_00184">
    <property type="entry name" value="Thr_tRNA_synth"/>
    <property type="match status" value="1"/>
</dbReference>
<dbReference type="InterPro" id="IPR002314">
    <property type="entry name" value="aa-tRNA-synt_IIb"/>
</dbReference>
<dbReference type="InterPro" id="IPR006195">
    <property type="entry name" value="aa-tRNA-synth_II"/>
</dbReference>
<dbReference type="InterPro" id="IPR045864">
    <property type="entry name" value="aa-tRNA-synth_II/BPL/LPL"/>
</dbReference>
<dbReference type="InterPro" id="IPR004154">
    <property type="entry name" value="Anticodon-bd"/>
</dbReference>
<dbReference type="InterPro" id="IPR036621">
    <property type="entry name" value="Anticodon-bd_dom_sf"/>
</dbReference>
<dbReference type="InterPro" id="IPR012675">
    <property type="entry name" value="Beta-grasp_dom_sf"/>
</dbReference>
<dbReference type="InterPro" id="IPR004095">
    <property type="entry name" value="TGS"/>
</dbReference>
<dbReference type="InterPro" id="IPR012676">
    <property type="entry name" value="TGS-like"/>
</dbReference>
<dbReference type="InterPro" id="IPR002320">
    <property type="entry name" value="Thr-tRNA-ligase_IIa"/>
</dbReference>
<dbReference type="InterPro" id="IPR018163">
    <property type="entry name" value="Thr/Ala-tRNA-synth_IIc_edit"/>
</dbReference>
<dbReference type="InterPro" id="IPR047246">
    <property type="entry name" value="ThrRS_anticodon"/>
</dbReference>
<dbReference type="InterPro" id="IPR033728">
    <property type="entry name" value="ThrRS_core"/>
</dbReference>
<dbReference type="InterPro" id="IPR012947">
    <property type="entry name" value="tRNA_SAD"/>
</dbReference>
<dbReference type="NCBIfam" id="TIGR00418">
    <property type="entry name" value="thrS"/>
    <property type="match status" value="1"/>
</dbReference>
<dbReference type="PANTHER" id="PTHR11451:SF56">
    <property type="entry name" value="THREONINE--TRNA LIGASE 1"/>
    <property type="match status" value="1"/>
</dbReference>
<dbReference type="PANTHER" id="PTHR11451">
    <property type="entry name" value="THREONINE-TRNA LIGASE"/>
    <property type="match status" value="1"/>
</dbReference>
<dbReference type="Pfam" id="PF03129">
    <property type="entry name" value="HGTP_anticodon"/>
    <property type="match status" value="1"/>
</dbReference>
<dbReference type="Pfam" id="PF02824">
    <property type="entry name" value="TGS"/>
    <property type="match status" value="1"/>
</dbReference>
<dbReference type="Pfam" id="PF00587">
    <property type="entry name" value="tRNA-synt_2b"/>
    <property type="match status" value="1"/>
</dbReference>
<dbReference type="Pfam" id="PF07973">
    <property type="entry name" value="tRNA_SAD"/>
    <property type="match status" value="1"/>
</dbReference>
<dbReference type="PRINTS" id="PR01047">
    <property type="entry name" value="TRNASYNTHTHR"/>
</dbReference>
<dbReference type="SMART" id="SM00863">
    <property type="entry name" value="tRNA_SAD"/>
    <property type="match status" value="1"/>
</dbReference>
<dbReference type="SUPFAM" id="SSF52954">
    <property type="entry name" value="Class II aaRS ABD-related"/>
    <property type="match status" value="1"/>
</dbReference>
<dbReference type="SUPFAM" id="SSF55681">
    <property type="entry name" value="Class II aaRS and biotin synthetases"/>
    <property type="match status" value="1"/>
</dbReference>
<dbReference type="SUPFAM" id="SSF81271">
    <property type="entry name" value="TGS-like"/>
    <property type="match status" value="1"/>
</dbReference>
<dbReference type="SUPFAM" id="SSF55186">
    <property type="entry name" value="ThrRS/AlaRS common domain"/>
    <property type="match status" value="1"/>
</dbReference>
<dbReference type="PROSITE" id="PS50862">
    <property type="entry name" value="AA_TRNA_LIGASE_II"/>
    <property type="match status" value="1"/>
</dbReference>
<dbReference type="PROSITE" id="PS51880">
    <property type="entry name" value="TGS"/>
    <property type="match status" value="1"/>
</dbReference>
<keyword id="KW-0030">Aminoacyl-tRNA synthetase</keyword>
<keyword id="KW-0067">ATP-binding</keyword>
<keyword id="KW-0963">Cytoplasm</keyword>
<keyword id="KW-0436">Ligase</keyword>
<keyword id="KW-0479">Metal-binding</keyword>
<keyword id="KW-0547">Nucleotide-binding</keyword>
<keyword id="KW-0648">Protein biosynthesis</keyword>
<keyword id="KW-0694">RNA-binding</keyword>
<keyword id="KW-0820">tRNA-binding</keyword>
<keyword id="KW-0862">Zinc</keyword>
<comment type="function">
    <text evidence="1">Catalyzes the attachment of threonine to tRNA(Thr) in a two-step reaction: L-threonine is first activated by ATP to form Thr-AMP and then transferred to the acceptor end of tRNA(Thr). Also edits incorrectly charged L-seryl-tRNA(Thr).</text>
</comment>
<comment type="catalytic activity">
    <reaction evidence="1">
        <text>tRNA(Thr) + L-threonine + ATP = L-threonyl-tRNA(Thr) + AMP + diphosphate + H(+)</text>
        <dbReference type="Rhea" id="RHEA:24624"/>
        <dbReference type="Rhea" id="RHEA-COMP:9670"/>
        <dbReference type="Rhea" id="RHEA-COMP:9704"/>
        <dbReference type="ChEBI" id="CHEBI:15378"/>
        <dbReference type="ChEBI" id="CHEBI:30616"/>
        <dbReference type="ChEBI" id="CHEBI:33019"/>
        <dbReference type="ChEBI" id="CHEBI:57926"/>
        <dbReference type="ChEBI" id="CHEBI:78442"/>
        <dbReference type="ChEBI" id="CHEBI:78534"/>
        <dbReference type="ChEBI" id="CHEBI:456215"/>
        <dbReference type="EC" id="6.1.1.3"/>
    </reaction>
</comment>
<comment type="cofactor">
    <cofactor evidence="1">
        <name>Zn(2+)</name>
        <dbReference type="ChEBI" id="CHEBI:29105"/>
    </cofactor>
    <text evidence="1">Binds 1 zinc ion per subunit.</text>
</comment>
<comment type="subunit">
    <text evidence="1">Homodimer.</text>
</comment>
<comment type="subcellular location">
    <subcellularLocation>
        <location evidence="1">Cytoplasm</location>
    </subcellularLocation>
</comment>
<comment type="similarity">
    <text evidence="1">Belongs to the class-II aminoacyl-tRNA synthetase family.</text>
</comment>
<proteinExistence type="inferred from homology"/>
<feature type="chain" id="PRO_0000101048" description="Threonine--tRNA ligase">
    <location>
        <begin position="1"/>
        <end position="645"/>
    </location>
</feature>
<feature type="domain" description="TGS" evidence="2">
    <location>
        <begin position="1"/>
        <end position="63"/>
    </location>
</feature>
<feature type="region of interest" description="Catalytic" evidence="1">
    <location>
        <begin position="242"/>
        <end position="540"/>
    </location>
</feature>
<feature type="binding site" evidence="1">
    <location>
        <position position="336"/>
    </location>
    <ligand>
        <name>Zn(2+)</name>
        <dbReference type="ChEBI" id="CHEBI:29105"/>
    </ligand>
</feature>
<feature type="binding site" evidence="1">
    <location>
        <position position="387"/>
    </location>
    <ligand>
        <name>Zn(2+)</name>
        <dbReference type="ChEBI" id="CHEBI:29105"/>
    </ligand>
</feature>
<feature type="binding site" evidence="1">
    <location>
        <position position="517"/>
    </location>
    <ligand>
        <name>Zn(2+)</name>
        <dbReference type="ChEBI" id="CHEBI:29105"/>
    </ligand>
</feature>
<evidence type="ECO:0000255" key="1">
    <source>
        <dbReference type="HAMAP-Rule" id="MF_00184"/>
    </source>
</evidence>
<evidence type="ECO:0000255" key="2">
    <source>
        <dbReference type="PROSITE-ProRule" id="PRU01228"/>
    </source>
</evidence>
<reference key="1">
    <citation type="journal article" date="2001" name="Lancet">
        <title>Whole genome sequencing of meticillin-resistant Staphylococcus aureus.</title>
        <authorList>
            <person name="Kuroda M."/>
            <person name="Ohta T."/>
            <person name="Uchiyama I."/>
            <person name="Baba T."/>
            <person name="Yuzawa H."/>
            <person name="Kobayashi I."/>
            <person name="Cui L."/>
            <person name="Oguchi A."/>
            <person name="Aoki K."/>
            <person name="Nagai Y."/>
            <person name="Lian J.-Q."/>
            <person name="Ito T."/>
            <person name="Kanamori M."/>
            <person name="Matsumaru H."/>
            <person name="Maruyama A."/>
            <person name="Murakami H."/>
            <person name="Hosoyama A."/>
            <person name="Mizutani-Ui Y."/>
            <person name="Takahashi N.K."/>
            <person name="Sawano T."/>
            <person name="Inoue R."/>
            <person name="Kaito C."/>
            <person name="Sekimizu K."/>
            <person name="Hirakawa H."/>
            <person name="Kuhara S."/>
            <person name="Goto S."/>
            <person name="Yabuzaki J."/>
            <person name="Kanehisa M."/>
            <person name="Yamashita A."/>
            <person name="Oshima K."/>
            <person name="Furuya K."/>
            <person name="Yoshino C."/>
            <person name="Shiba T."/>
            <person name="Hattori M."/>
            <person name="Ogasawara N."/>
            <person name="Hayashi H."/>
            <person name="Hiramatsu K."/>
        </authorList>
    </citation>
    <scope>NUCLEOTIDE SEQUENCE [LARGE SCALE GENOMIC DNA]</scope>
    <source>
        <strain>Mu50 / ATCC 700699</strain>
    </source>
</reference>